<name>PB2_I57A1</name>
<dbReference type="EMBL" id="M81575">
    <property type="protein sequence ID" value="AAA19213.2"/>
    <property type="molecule type" value="Genomic_RNA"/>
</dbReference>
<dbReference type="SMR" id="P26124"/>
<dbReference type="GO" id="GO:0033650">
    <property type="term" value="C:host cell mitochondrion"/>
    <property type="evidence" value="ECO:0007669"/>
    <property type="project" value="UniProtKB-SubCell"/>
</dbReference>
<dbReference type="GO" id="GO:0042025">
    <property type="term" value="C:host cell nucleus"/>
    <property type="evidence" value="ECO:0007669"/>
    <property type="project" value="UniProtKB-SubCell"/>
</dbReference>
<dbReference type="GO" id="GO:0044423">
    <property type="term" value="C:virion component"/>
    <property type="evidence" value="ECO:0007669"/>
    <property type="project" value="UniProtKB-UniRule"/>
</dbReference>
<dbReference type="GO" id="GO:0003723">
    <property type="term" value="F:RNA binding"/>
    <property type="evidence" value="ECO:0007669"/>
    <property type="project" value="UniProtKB-UniRule"/>
</dbReference>
<dbReference type="GO" id="GO:0003968">
    <property type="term" value="F:RNA-directed RNA polymerase activity"/>
    <property type="evidence" value="ECO:0007669"/>
    <property type="project" value="UniProtKB-UniRule"/>
</dbReference>
<dbReference type="GO" id="GO:0006370">
    <property type="term" value="P:7-methylguanosine mRNA capping"/>
    <property type="evidence" value="ECO:0007669"/>
    <property type="project" value="UniProtKB-UniRule"/>
</dbReference>
<dbReference type="GO" id="GO:0075526">
    <property type="term" value="P:cap snatching"/>
    <property type="evidence" value="ECO:0007669"/>
    <property type="project" value="UniProtKB-UniRule"/>
</dbReference>
<dbReference type="GO" id="GO:0006351">
    <property type="term" value="P:DNA-templated transcription"/>
    <property type="evidence" value="ECO:0007669"/>
    <property type="project" value="UniProtKB-UniRule"/>
</dbReference>
<dbReference type="GO" id="GO:0039545">
    <property type="term" value="P:symbiont-mediated suppression of host cytoplasmic pattern recognition receptor signaling pathway via inhibition of MAVS activity"/>
    <property type="evidence" value="ECO:0007669"/>
    <property type="project" value="UniProtKB-UniRule"/>
</dbReference>
<dbReference type="GO" id="GO:0039657">
    <property type="term" value="P:symbiont-mediated suppression of host gene expression"/>
    <property type="evidence" value="ECO:0007669"/>
    <property type="project" value="UniProtKB-KW"/>
</dbReference>
<dbReference type="GO" id="GO:0039523">
    <property type="term" value="P:symbiont-mediated suppression of host mRNA transcription via inhibition of RNA polymerase II activity"/>
    <property type="evidence" value="ECO:0007669"/>
    <property type="project" value="UniProtKB-UniRule"/>
</dbReference>
<dbReference type="GO" id="GO:0039694">
    <property type="term" value="P:viral RNA genome replication"/>
    <property type="evidence" value="ECO:0007669"/>
    <property type="project" value="InterPro"/>
</dbReference>
<dbReference type="FunFam" id="3.30.30.90:FF:000001">
    <property type="entry name" value="Polymerase basic protein 2"/>
    <property type="match status" value="1"/>
</dbReference>
<dbReference type="Gene3D" id="3.30.30.90">
    <property type="entry name" value="Polymerase Basic Protein 2, C-terminal domain"/>
    <property type="match status" value="1"/>
</dbReference>
<dbReference type="HAMAP" id="MF_04062">
    <property type="entry name" value="INV_PB2"/>
    <property type="match status" value="1"/>
</dbReference>
<dbReference type="InterPro" id="IPR049110">
    <property type="entry name" value="Flu_PB2_2nd"/>
</dbReference>
<dbReference type="InterPro" id="IPR049114">
    <property type="entry name" value="Flu_PB2_6th"/>
</dbReference>
<dbReference type="InterPro" id="IPR049115">
    <property type="entry name" value="Flu_PB2_C"/>
</dbReference>
<dbReference type="InterPro" id="IPR048298">
    <property type="entry name" value="Flu_PB2_CAP-bd"/>
</dbReference>
<dbReference type="InterPro" id="IPR049111">
    <property type="entry name" value="Flu_PB2_middle"/>
</dbReference>
<dbReference type="InterPro" id="IPR049106">
    <property type="entry name" value="Flu_PB2_N"/>
</dbReference>
<dbReference type="InterPro" id="IPR001591">
    <property type="entry name" value="INV_PB2"/>
</dbReference>
<dbReference type="InterPro" id="IPR049113">
    <property type="entry name" value="PB2_helical"/>
</dbReference>
<dbReference type="InterPro" id="IPR037258">
    <property type="entry name" value="PDB2_C"/>
</dbReference>
<dbReference type="Pfam" id="PF20947">
    <property type="entry name" value="Flu_PB2_1st"/>
    <property type="match status" value="1"/>
</dbReference>
<dbReference type="Pfam" id="PF20948">
    <property type="entry name" value="Flu_PB2_2nd"/>
    <property type="match status" value="1"/>
</dbReference>
<dbReference type="Pfam" id="PF20949">
    <property type="entry name" value="Flu_PB2_3rd"/>
    <property type="match status" value="1"/>
</dbReference>
<dbReference type="Pfam" id="PF20950">
    <property type="entry name" value="Flu_PB2_4th"/>
    <property type="match status" value="1"/>
</dbReference>
<dbReference type="Pfam" id="PF00604">
    <property type="entry name" value="Flu_PB2_5th"/>
    <property type="match status" value="1"/>
</dbReference>
<dbReference type="Pfam" id="PF20951">
    <property type="entry name" value="Flu_PB2_6th"/>
    <property type="match status" value="1"/>
</dbReference>
<dbReference type="Pfam" id="PF20952">
    <property type="entry name" value="Flu_PB2_7th"/>
    <property type="match status" value="1"/>
</dbReference>
<dbReference type="SUPFAM" id="SSF160453">
    <property type="entry name" value="PB2 C-terminal domain-like"/>
    <property type="match status" value="1"/>
</dbReference>
<sequence>MERIKELRNLMSQSRTREILTKTTVDHMAIIKKYTSGRQEKNPSLRMKWMMAMKYPITADKRITEMIPERNEQGQTLWSKMSDAGSDRVMVSPLAVTWWNRNGPMTSTVHYPKIYKTYFEKVERLKHGTFGPVHFRNQVKIRRRVDINPGHADLSAKEAQDVIMEVVFPNEVGARILTSESQLTITKEKKEELQDCKISPLMVAYMLERELVRKTRFLPVAGGTSSVYIEVLHLTQGTCWEQMYTPGGEVRNDDVDQSLIIAARNIVRRAAVSADPLASLLEMCHSTQIGGTRMVDILRQNPTEEQAVDICKAAMGLRISSSFSFGGFTFKRTSGSSVKREEEVLTGNLQTLKIRVHEGYEEFTMVGKRATAILRKATRRLIQLIVSGRDEQSIAEAIIVAMVFSQEDCMIKAVRGDLNFVNRANQRLNPMHQLLRHFQKDAKVLFQNWGIEHIDNVMGMIGVLPDMTPSTEMSMRGVRVSKMGVDEYSSAERVVVSIDRFLRVRDQRGNVLLSPEEVSETQGTEKLTITYSSSMMWEINGPESVLVNTYQWIIRNWETVKIQWSQNPTMLYNKMEFEPFQSLVPKAIRGQYSGFVRTLFQQMRDVLGTFDTTQIIKLLPFAAAPPKQSRMQFSSLTVNVRGSGMRILVRGNSPVFNYNKTTKRLTILGKDAGTLTEDPDEGTSGVESAVLRGFLILGKEDRRYGPALSINELSNLAKGEKANVLIGQGDVVLVMKRKRDSSILTDSQTATKRIRMAIN</sequence>
<reference key="1">
    <citation type="journal article" date="1992" name="Virology">
        <title>Sequence changes in the live attenuated, cold-adapted variants of influenza A/Leningrad/134/57 (H2N2) virus.</title>
        <authorList>
            <person name="Klimov A.I."/>
            <person name="Cox N.J."/>
            <person name="Yotov W.V."/>
            <person name="Rocha E."/>
            <person name="Alexandrova G.I."/>
            <person name="Kendal A.P."/>
        </authorList>
    </citation>
    <scope>NUCLEOTIDE SEQUENCE [GENOMIC RNA]</scope>
</reference>
<reference key="2">
    <citation type="submission" date="2000-06" db="EMBL/GenBank/DDBJ databases">
        <authorList>
            <person name="Klimov A.I."/>
        </authorList>
    </citation>
    <scope>SEQUENCE REVISION TO 608 AND 655</scope>
</reference>
<gene>
    <name evidence="1" type="primary">PB2</name>
</gene>
<comment type="function">
    <text evidence="1">Plays an essential role in transcription initiation and cap-stealing mechanism, in which cellular capped pre-mRNAs are used to generate primers for viral transcription. Recognizes and binds the 7-methylguanosine-containing cap of the target pre-RNA which is subsequently cleaved after 10-13 nucleotides by the viral protein PA. Plays a role in the initiation of the viral genome replication and modulates the activity of the ribonucleoprotein (RNP) complex. In addition, participates in the inhibition of type I interferon induction through interaction with and inhibition of the host mitochondrial antiviral signaling protein MAVS.</text>
</comment>
<comment type="subunit">
    <text evidence="1">Influenza RNA polymerase is composed of three subunits: PB1, PB2 and PA. Interacts (via N-terminus) with PB1 (via C-terminus). Interacts with nucleoprotein NP (via N-terminus). Interacts (via N-terminus) with host MAVS (via N-terminus); this interaction inhibits host innate immune response.</text>
</comment>
<comment type="subcellular location">
    <subcellularLocation>
        <location evidence="1">Virion</location>
    </subcellularLocation>
    <subcellularLocation>
        <location evidence="1">Host nucleus</location>
    </subcellularLocation>
    <subcellularLocation>
        <location evidence="1">Host mitochondrion</location>
    </subcellularLocation>
</comment>
<comment type="similarity">
    <text evidence="1">Belongs to the influenza viruses PB2 family.</text>
</comment>
<organismHost>
    <name type="scientific">Aves</name>
    <dbReference type="NCBI Taxonomy" id="8782"/>
</organismHost>
<organismHost>
    <name type="scientific">Homo sapiens</name>
    <name type="common">Human</name>
    <dbReference type="NCBI Taxonomy" id="9606"/>
</organismHost>
<protein>
    <recommendedName>
        <fullName evidence="1">Polymerase basic protein 2</fullName>
    </recommendedName>
    <alternativeName>
        <fullName evidence="1">RNA-directed RNA polymerase subunit P3</fullName>
    </alternativeName>
</protein>
<proteinExistence type="inferred from homology"/>
<evidence type="ECO:0000255" key="1">
    <source>
        <dbReference type="HAMAP-Rule" id="MF_04062"/>
    </source>
</evidence>
<accession>P26124</accession>
<keyword id="KW-1157">Cap snatching</keyword>
<keyword id="KW-1262">Eukaryotic host gene expression shutoff by virus</keyword>
<keyword id="KW-1191">Eukaryotic host transcription shutoff by virus</keyword>
<keyword id="KW-1190">Host gene expression shutoff by virus</keyword>
<keyword id="KW-1045">Host mitochondrion</keyword>
<keyword id="KW-1048">Host nucleus</keyword>
<keyword id="KW-0945">Host-virus interaction</keyword>
<keyword id="KW-1090">Inhibition of host innate immune response by virus</keyword>
<keyword id="KW-1097">Inhibition of host MAVS by virus</keyword>
<keyword id="KW-1113">Inhibition of host RLR pathway by virus</keyword>
<keyword id="KW-1104">Inhibition of host RNA polymerase II by virus</keyword>
<keyword id="KW-0506">mRNA capping</keyword>
<keyword id="KW-0507">mRNA processing</keyword>
<keyword id="KW-0899">Viral immunoevasion</keyword>
<keyword id="KW-1195">Viral transcription</keyword>
<keyword id="KW-0946">Virion</keyword>
<feature type="chain" id="PRO_0000078828" description="Polymerase basic protein 2">
    <location>
        <begin position="1"/>
        <end position="759"/>
    </location>
</feature>
<feature type="short sequence motif" description="Nuclear localization signal" evidence="1">
    <location>
        <begin position="736"/>
        <end position="739"/>
    </location>
</feature>
<feature type="site" description="Mammalian adaptation" evidence="1">
    <location>
        <position position="627"/>
    </location>
</feature>
<organism>
    <name type="scientific">Influenza A virus (strain A/Leningrad/134/1957 H2N2)</name>
    <dbReference type="NCBI Taxonomy" id="387163"/>
    <lineage>
        <taxon>Viruses</taxon>
        <taxon>Riboviria</taxon>
        <taxon>Orthornavirae</taxon>
        <taxon>Negarnaviricota</taxon>
        <taxon>Polyploviricotina</taxon>
        <taxon>Insthoviricetes</taxon>
        <taxon>Articulavirales</taxon>
        <taxon>Orthomyxoviridae</taxon>
        <taxon>Alphainfluenzavirus</taxon>
        <taxon>Alphainfluenzavirus influenzae</taxon>
        <taxon>Influenza A virus</taxon>
    </lineage>
</organism>